<sequence>MTDAKYVLCRWEKRLWPAKVLARTETSAKNKRKKEFFLDVQILSLKEKIQVKSSAVEALQKSHIENIAAFLASQNEVPATPLEELTYRRSLRVALDVLNERTSLSPESHPVENGSTPSQKGKPDADMASQVSSAPSPSFLSEDDQAVAAQCASKRRWECSPKSLSPLSASEEDLRCKVDPKTGLSESGALGTEVPAPTGDESQNGSGSQLDHGQESTTKKRQRNSGEKPARRGKAESGLSKGDSVAESGGQASSCVALASPRLPSQTWEGDPCAGVEGCDPVESSGNIRPLLDSERSKGRLTKRPRLDGGRNPLPRHLGTRTVGAVPSRRSCSGEVTTLRRAGDSDRPEEADPMSSEESTGFKSVHSLLEEEEEEEEEEEEEEEPPRILLYHEPRSFEVGMLVWLKYQKYPFWPAVVKSVRRRDKKASVLFIEGNMNPKGRGITVSLRRLKHFDCKEKHALLDRAKEDFAQAIGWCVSLITDYRVRLGCGSFAGSFLEYYAADISYPVRKSIQQDVLGTRFPQLGKGDPEEPMGDSRLGQWRPCRKVLPDRSRAARDKANQKLVEYIVKAKGAESHLRAILHSRKPSRWLKTFLSSNQYVTCMETYLEDEAQLDEVVEYLQGVCRDMDGEMPARGSGDRIRFILDVLLPEAIICAISAVEAVDYKTAEQKYLRGPTLSYREKEIFDNELLEERNRRRR</sequence>
<comment type="function">
    <text evidence="1">Involved in the DNA damage response pathway by contributing to the maintenance of chromatin architecture. Recruited to the vicinity of DNA breaks by TP53BP1 and plays an accessory role to facilitate damage-induced chromatin changes and promoting chromatin relaxation. Required for efficient DNA repair and cell survival following DNA damage (By similarity).</text>
</comment>
<comment type="subunit">
    <text evidence="1">Interacts with TP53BP1 (via BRCT domain); the interaction is not dependent on its phosphorylation status. Binds nucleosomes. Interacts with trimethylated 'Lys-36' of histone H3 (H3K36me3) (in vitro) (By similarity).</text>
</comment>
<comment type="subcellular location">
    <subcellularLocation>
        <location evidence="1">Nucleus</location>
    </subcellularLocation>
    <text evidence="1">Recruited to DNA damage sites via its interaction with the BRCT domain of TP53BP1.</text>
</comment>
<comment type="domain">
    <text>The PWWP domain mediates the interaction with nucleosomes.</text>
</comment>
<comment type="similarity">
    <text evidence="4">Belongs to the PWWP3A family.</text>
</comment>
<accession>B1H224</accession>
<gene>
    <name evidence="5" type="primary">Pwwp3a</name>
    <name evidence="5" type="synonym">Mum1</name>
</gene>
<dbReference type="EMBL" id="BC160828">
    <property type="protein sequence ID" value="AAI60828.1"/>
    <property type="molecule type" value="mRNA"/>
</dbReference>
<dbReference type="RefSeq" id="XP_006241035.1">
    <property type="nucleotide sequence ID" value="XM_006240973.5"/>
</dbReference>
<dbReference type="RefSeq" id="XP_006241036.1">
    <property type="nucleotide sequence ID" value="XM_006240974.5"/>
</dbReference>
<dbReference type="RefSeq" id="XP_006241037.1">
    <property type="nucleotide sequence ID" value="XM_006240975.5"/>
</dbReference>
<dbReference type="SMR" id="B1H224"/>
<dbReference type="FunCoup" id="B1H224">
    <property type="interactions" value="1500"/>
</dbReference>
<dbReference type="STRING" id="10116.ENSRNOP00000057438"/>
<dbReference type="iPTMnet" id="B1H224"/>
<dbReference type="PhosphoSitePlus" id="B1H224"/>
<dbReference type="PaxDb" id="10116-ENSRNOP00000057438"/>
<dbReference type="GeneID" id="362838"/>
<dbReference type="UCSC" id="RGD:1308340">
    <property type="organism name" value="rat"/>
</dbReference>
<dbReference type="AGR" id="RGD:1308340"/>
<dbReference type="CTD" id="84939"/>
<dbReference type="RGD" id="1308340">
    <property type="gene designation" value="Pwwp3a"/>
</dbReference>
<dbReference type="VEuPathDB" id="HostDB:ENSRNOG00000024549"/>
<dbReference type="eggNOG" id="ENOG502QPRU">
    <property type="taxonomic scope" value="Eukaryota"/>
</dbReference>
<dbReference type="HOGENOM" id="CLU_388271_0_0_1"/>
<dbReference type="InParanoid" id="B1H224"/>
<dbReference type="OrthoDB" id="57879at9989"/>
<dbReference type="PhylomeDB" id="B1H224"/>
<dbReference type="TreeFam" id="TF328774"/>
<dbReference type="PRO" id="PR:B1H224"/>
<dbReference type="Proteomes" id="UP000002494">
    <property type="component" value="Chromosome 7"/>
</dbReference>
<dbReference type="Bgee" id="ENSRNOG00000024549">
    <property type="expression patterns" value="Expressed in testis and 19 other cell types or tissues"/>
</dbReference>
<dbReference type="GO" id="GO:0005829">
    <property type="term" value="C:cytosol"/>
    <property type="evidence" value="ECO:0000318"/>
    <property type="project" value="GO_Central"/>
</dbReference>
<dbReference type="GO" id="GO:0005654">
    <property type="term" value="C:nucleoplasm"/>
    <property type="evidence" value="ECO:0007669"/>
    <property type="project" value="Ensembl"/>
</dbReference>
<dbReference type="GO" id="GO:0005634">
    <property type="term" value="C:nucleus"/>
    <property type="evidence" value="ECO:0000250"/>
    <property type="project" value="UniProtKB"/>
</dbReference>
<dbReference type="GO" id="GO:0031491">
    <property type="term" value="F:nucleosome binding"/>
    <property type="evidence" value="ECO:0000250"/>
    <property type="project" value="UniProtKB"/>
</dbReference>
<dbReference type="GO" id="GO:0006325">
    <property type="term" value="P:chromatin organization"/>
    <property type="evidence" value="ECO:0000250"/>
    <property type="project" value="UniProtKB"/>
</dbReference>
<dbReference type="GO" id="GO:0006281">
    <property type="term" value="P:DNA repair"/>
    <property type="evidence" value="ECO:0000250"/>
    <property type="project" value="UniProtKB"/>
</dbReference>
<dbReference type="CDD" id="cd06080">
    <property type="entry name" value="PWWP_MUM1-like"/>
    <property type="match status" value="1"/>
</dbReference>
<dbReference type="FunFam" id="2.30.30.140:FF:000063">
    <property type="entry name" value="PWWP domain-containing DNA repair factor 3A"/>
    <property type="match status" value="1"/>
</dbReference>
<dbReference type="Gene3D" id="2.30.30.140">
    <property type="match status" value="1"/>
</dbReference>
<dbReference type="Gene3D" id="6.10.300.20">
    <property type="match status" value="1"/>
</dbReference>
<dbReference type="InterPro" id="IPR035504">
    <property type="entry name" value="MUM1-like_PWWP"/>
</dbReference>
<dbReference type="InterPro" id="IPR040263">
    <property type="entry name" value="PWP3A_3B_4"/>
</dbReference>
<dbReference type="InterPro" id="IPR048795">
    <property type="entry name" value="PWP3A_3B_4_C"/>
</dbReference>
<dbReference type="InterPro" id="IPR048765">
    <property type="entry name" value="PWP3A_3B_4_N"/>
</dbReference>
<dbReference type="PANTHER" id="PTHR31333">
    <property type="entry name" value="PWWP DOMAIN-CONTAINING DNA REPAIR FACTOR 3 FAMILY MEMBER"/>
    <property type="match status" value="1"/>
</dbReference>
<dbReference type="PANTHER" id="PTHR31333:SF4">
    <property type="entry name" value="PWWP DOMAIN-CONTAINING DNA REPAIR FACTOR 3A"/>
    <property type="match status" value="1"/>
</dbReference>
<dbReference type="Pfam" id="PF20884">
    <property type="entry name" value="MUM1-like_PWWP"/>
    <property type="match status" value="1"/>
</dbReference>
<dbReference type="Pfam" id="PF20886">
    <property type="entry name" value="PWP3A-B_C"/>
    <property type="match status" value="1"/>
</dbReference>
<dbReference type="Pfam" id="PF20887">
    <property type="entry name" value="PWP3A-B_N"/>
    <property type="match status" value="1"/>
</dbReference>
<dbReference type="SUPFAM" id="SSF63748">
    <property type="entry name" value="Tudor/PWWP/MBT"/>
    <property type="match status" value="1"/>
</dbReference>
<name>PWP3A_RAT</name>
<organism>
    <name type="scientific">Rattus norvegicus</name>
    <name type="common">Rat</name>
    <dbReference type="NCBI Taxonomy" id="10116"/>
    <lineage>
        <taxon>Eukaryota</taxon>
        <taxon>Metazoa</taxon>
        <taxon>Chordata</taxon>
        <taxon>Craniata</taxon>
        <taxon>Vertebrata</taxon>
        <taxon>Euteleostomi</taxon>
        <taxon>Mammalia</taxon>
        <taxon>Eutheria</taxon>
        <taxon>Euarchontoglires</taxon>
        <taxon>Glires</taxon>
        <taxon>Rodentia</taxon>
        <taxon>Myomorpha</taxon>
        <taxon>Muroidea</taxon>
        <taxon>Muridae</taxon>
        <taxon>Murinae</taxon>
        <taxon>Rattus</taxon>
    </lineage>
</organism>
<reference key="1">
    <citation type="journal article" date="2004" name="Genome Res.">
        <title>The status, quality, and expansion of the NIH full-length cDNA project: the Mammalian Gene Collection (MGC).</title>
        <authorList>
            <consortium name="The MGC Project Team"/>
        </authorList>
    </citation>
    <scope>NUCLEOTIDE SEQUENCE [LARGE SCALE MRNA]</scope>
    <source>
        <tissue>Testis</tissue>
    </source>
</reference>
<reference key="2">
    <citation type="journal article" date="2012" name="Nat. Commun.">
        <title>Quantitative maps of protein phosphorylation sites across 14 different rat organs and tissues.</title>
        <authorList>
            <person name="Lundby A."/>
            <person name="Secher A."/>
            <person name="Lage K."/>
            <person name="Nordsborg N.B."/>
            <person name="Dmytriyev A."/>
            <person name="Lundby C."/>
            <person name="Olsen J.V."/>
        </authorList>
    </citation>
    <scope>PHOSPHORYLATION [LARGE SCALE ANALYSIS] AT SER-165; SER-168 AND SER-170</scope>
    <scope>IDENTIFICATION BY MASS SPECTROMETRY [LARGE SCALE ANALYSIS]</scope>
</reference>
<keyword id="KW-0227">DNA damage</keyword>
<keyword id="KW-0234">DNA repair</keyword>
<keyword id="KW-0539">Nucleus</keyword>
<keyword id="KW-0597">Phosphoprotein</keyword>
<keyword id="KW-1185">Reference proteome</keyword>
<proteinExistence type="evidence at protein level"/>
<evidence type="ECO:0000250" key="1"/>
<evidence type="ECO:0000250" key="2">
    <source>
        <dbReference type="UniProtKB" id="Q6DID5"/>
    </source>
</evidence>
<evidence type="ECO:0000256" key="3">
    <source>
        <dbReference type="SAM" id="MobiDB-lite"/>
    </source>
</evidence>
<evidence type="ECO:0000305" key="4"/>
<evidence type="ECO:0000312" key="5">
    <source>
        <dbReference type="RGD" id="1308340"/>
    </source>
</evidence>
<evidence type="ECO:0007744" key="6">
    <source>
    </source>
</evidence>
<feature type="chain" id="PRO_0000375870" description="PWWP domain-containing DNA repair factor 3A">
    <location>
        <begin position="1"/>
        <end position="698"/>
    </location>
</feature>
<feature type="domain" description="PWWP">
    <location>
        <begin position="399"/>
        <end position="460"/>
    </location>
</feature>
<feature type="region of interest" description="Disordered" evidence="3">
    <location>
        <begin position="102"/>
        <end position="145"/>
    </location>
</feature>
<feature type="region of interest" description="Disordered" evidence="3">
    <location>
        <begin position="159"/>
        <end position="386"/>
    </location>
</feature>
<feature type="compositionally biased region" description="Polar residues" evidence="3">
    <location>
        <begin position="129"/>
        <end position="139"/>
    </location>
</feature>
<feature type="compositionally biased region" description="Polar residues" evidence="3">
    <location>
        <begin position="200"/>
        <end position="211"/>
    </location>
</feature>
<feature type="compositionally biased region" description="Basic and acidic residues" evidence="3">
    <location>
        <begin position="212"/>
        <end position="235"/>
    </location>
</feature>
<feature type="compositionally biased region" description="Basic and acidic residues" evidence="3">
    <location>
        <begin position="341"/>
        <end position="350"/>
    </location>
</feature>
<feature type="compositionally biased region" description="Acidic residues" evidence="3">
    <location>
        <begin position="370"/>
        <end position="384"/>
    </location>
</feature>
<feature type="modified residue" description="Phosphoserine" evidence="2">
    <location>
        <position position="105"/>
    </location>
</feature>
<feature type="modified residue" description="Phosphoserine" evidence="6">
    <location>
        <position position="165"/>
    </location>
</feature>
<feature type="modified residue" description="Phosphoserine" evidence="6">
    <location>
        <position position="168"/>
    </location>
</feature>
<feature type="modified residue" description="Phosphoserine" evidence="6">
    <location>
        <position position="170"/>
    </location>
</feature>
<feature type="modified residue" description="Phosphoserine" evidence="2">
    <location>
        <position position="355"/>
    </location>
</feature>
<feature type="modified residue" description="Phosphoserine" evidence="2">
    <location>
        <position position="356"/>
    </location>
</feature>
<protein>
    <recommendedName>
        <fullName evidence="4">PWWP domain-containing DNA repair factor 3A</fullName>
        <shortName evidence="4">PWWP3A</shortName>
    </recommendedName>
    <alternativeName>
        <fullName>Mutated melanoma-associated antigen 1</fullName>
        <shortName>MUM-1</shortName>
    </alternativeName>
    <alternativeName>
        <fullName>PWWP domain-containing protein MUM1</fullName>
    </alternativeName>
</protein>